<reference key="1">
    <citation type="journal article" date="2006" name="Proc. Natl. Acad. Sci. U.S.A.">
        <title>Molecular genetic anatomy of inter- and intraserotype variation in the human bacterial pathogen group A Streptococcus.</title>
        <authorList>
            <person name="Beres S.B."/>
            <person name="Richter E.W."/>
            <person name="Nagiec M.J."/>
            <person name="Sumby P."/>
            <person name="Porcella S.F."/>
            <person name="DeLeo F.R."/>
            <person name="Musser J.M."/>
        </authorList>
    </citation>
    <scope>NUCLEOTIDE SEQUENCE [LARGE SCALE GENOMIC DNA]</scope>
    <source>
        <strain>MGAS2096</strain>
    </source>
</reference>
<organism>
    <name type="scientific">Streptococcus pyogenes serotype M12 (strain MGAS2096)</name>
    <dbReference type="NCBI Taxonomy" id="370553"/>
    <lineage>
        <taxon>Bacteria</taxon>
        <taxon>Bacillati</taxon>
        <taxon>Bacillota</taxon>
        <taxon>Bacilli</taxon>
        <taxon>Lactobacillales</taxon>
        <taxon>Streptococcaceae</taxon>
        <taxon>Streptococcus</taxon>
    </lineage>
</organism>
<keyword id="KW-0067">ATP-binding</keyword>
<keyword id="KW-0963">Cytoplasm</keyword>
<keyword id="KW-0418">Kinase</keyword>
<keyword id="KW-0460">Magnesium</keyword>
<keyword id="KW-0479">Metal-binding</keyword>
<keyword id="KW-0547">Nucleotide-binding</keyword>
<keyword id="KW-0808">Transferase</keyword>
<feature type="chain" id="PRO_1000002270" description="Acetate kinase">
    <location>
        <begin position="1"/>
        <end position="398"/>
    </location>
</feature>
<feature type="active site" description="Proton donor/acceptor" evidence="1">
    <location>
        <position position="146"/>
    </location>
</feature>
<feature type="binding site" evidence="1">
    <location>
        <position position="8"/>
    </location>
    <ligand>
        <name>Mg(2+)</name>
        <dbReference type="ChEBI" id="CHEBI:18420"/>
    </ligand>
</feature>
<feature type="binding site" evidence="1">
    <location>
        <position position="15"/>
    </location>
    <ligand>
        <name>ATP</name>
        <dbReference type="ChEBI" id="CHEBI:30616"/>
    </ligand>
</feature>
<feature type="binding site" evidence="1">
    <location>
        <position position="89"/>
    </location>
    <ligand>
        <name>substrate</name>
    </ligand>
</feature>
<feature type="binding site" evidence="1">
    <location>
        <begin position="206"/>
        <end position="210"/>
    </location>
    <ligand>
        <name>ATP</name>
        <dbReference type="ChEBI" id="CHEBI:30616"/>
    </ligand>
</feature>
<feature type="binding site" evidence="1">
    <location>
        <begin position="283"/>
        <end position="285"/>
    </location>
    <ligand>
        <name>ATP</name>
        <dbReference type="ChEBI" id="CHEBI:30616"/>
    </ligand>
</feature>
<feature type="binding site" evidence="1">
    <location>
        <begin position="331"/>
        <end position="335"/>
    </location>
    <ligand>
        <name>ATP</name>
        <dbReference type="ChEBI" id="CHEBI:30616"/>
    </ligand>
</feature>
<feature type="binding site" evidence="1">
    <location>
        <position position="383"/>
    </location>
    <ligand>
        <name>Mg(2+)</name>
        <dbReference type="ChEBI" id="CHEBI:18420"/>
    </ligand>
</feature>
<feature type="site" description="Transition state stabilizer" evidence="1">
    <location>
        <position position="178"/>
    </location>
</feature>
<feature type="site" description="Transition state stabilizer" evidence="1">
    <location>
        <position position="239"/>
    </location>
</feature>
<name>ACKA_STRPB</name>
<comment type="function">
    <text evidence="1">Catalyzes the formation of acetyl phosphate from acetate and ATP. Can also catalyze the reverse reaction.</text>
</comment>
<comment type="catalytic activity">
    <reaction evidence="1">
        <text>acetate + ATP = acetyl phosphate + ADP</text>
        <dbReference type="Rhea" id="RHEA:11352"/>
        <dbReference type="ChEBI" id="CHEBI:22191"/>
        <dbReference type="ChEBI" id="CHEBI:30089"/>
        <dbReference type="ChEBI" id="CHEBI:30616"/>
        <dbReference type="ChEBI" id="CHEBI:456216"/>
        <dbReference type="EC" id="2.7.2.1"/>
    </reaction>
</comment>
<comment type="cofactor">
    <cofactor evidence="1">
        <name>Mg(2+)</name>
        <dbReference type="ChEBI" id="CHEBI:18420"/>
    </cofactor>
    <cofactor evidence="1">
        <name>Mn(2+)</name>
        <dbReference type="ChEBI" id="CHEBI:29035"/>
    </cofactor>
    <text evidence="1">Mg(2+). Can also accept Mn(2+).</text>
</comment>
<comment type="pathway">
    <text evidence="1">Metabolic intermediate biosynthesis; acetyl-CoA biosynthesis; acetyl-CoA from acetate: step 1/2.</text>
</comment>
<comment type="subunit">
    <text evidence="1">Homodimer.</text>
</comment>
<comment type="subcellular location">
    <subcellularLocation>
        <location evidence="1">Cytoplasm</location>
    </subcellularLocation>
</comment>
<comment type="similarity">
    <text evidence="1">Belongs to the acetokinase family.</text>
</comment>
<protein>
    <recommendedName>
        <fullName evidence="1">Acetate kinase</fullName>
        <ecNumber evidence="1">2.7.2.1</ecNumber>
    </recommendedName>
    <alternativeName>
        <fullName evidence="1">Acetokinase</fullName>
    </alternativeName>
</protein>
<accession>Q1JE09</accession>
<proteinExistence type="inferred from homology"/>
<sequence length="398" mass="43605">MSKTIAINAGSSSLKWQLYQMPEEEVLAQGIIERIGLKDSISTVKYDGKKEEQILDIHDHTEAVKILLNDLIHFGIIAAYDEITGVGHRVVAGGELFKESVVVNDKVLEQIEELSVLAPLHNPGAAAGIRAFRDILPDITSVCVFDTSFHTSMAKHTYLYPIPQKYYTDYKVRKYGAHGTSHKYVAQEAAKMLGRPLEELKLITAHIGNGVSITANYHGKSVDTSMGFTPLAGPMMGTRSGDIDPAIIPYLIEQDPELKDAADVVNMLNKKSGLSGVSGISSDMRDIEAGLQEDNPDAVLAYNIFIDRIKKCIGQYFAVLNGADALVFTAGMGENAPLMRQDVIGGLTWFGMDIDPEKNVFGYRGDISTPESKVKVLVISTDEELCIARDVERLKNTK</sequence>
<dbReference type="EC" id="2.7.2.1" evidence="1"/>
<dbReference type="EMBL" id="CP000261">
    <property type="protein sequence ID" value="ABF35149.1"/>
    <property type="molecule type" value="Genomic_DNA"/>
</dbReference>
<dbReference type="SMR" id="Q1JE09"/>
<dbReference type="KEGG" id="spj:MGAS2096_Spy0097"/>
<dbReference type="HOGENOM" id="CLU_020352_0_1_9"/>
<dbReference type="UniPathway" id="UPA00340">
    <property type="reaction ID" value="UER00458"/>
</dbReference>
<dbReference type="GO" id="GO:0005737">
    <property type="term" value="C:cytoplasm"/>
    <property type="evidence" value="ECO:0007669"/>
    <property type="project" value="UniProtKB-SubCell"/>
</dbReference>
<dbReference type="GO" id="GO:0008776">
    <property type="term" value="F:acetate kinase activity"/>
    <property type="evidence" value="ECO:0007669"/>
    <property type="project" value="UniProtKB-UniRule"/>
</dbReference>
<dbReference type="GO" id="GO:0005524">
    <property type="term" value="F:ATP binding"/>
    <property type="evidence" value="ECO:0007669"/>
    <property type="project" value="UniProtKB-KW"/>
</dbReference>
<dbReference type="GO" id="GO:0000287">
    <property type="term" value="F:magnesium ion binding"/>
    <property type="evidence" value="ECO:0007669"/>
    <property type="project" value="UniProtKB-UniRule"/>
</dbReference>
<dbReference type="GO" id="GO:0006083">
    <property type="term" value="P:acetate metabolic process"/>
    <property type="evidence" value="ECO:0007669"/>
    <property type="project" value="TreeGrafter"/>
</dbReference>
<dbReference type="GO" id="GO:0006085">
    <property type="term" value="P:acetyl-CoA biosynthetic process"/>
    <property type="evidence" value="ECO:0007669"/>
    <property type="project" value="UniProtKB-UniRule"/>
</dbReference>
<dbReference type="CDD" id="cd24010">
    <property type="entry name" value="ASKHA_NBD_AcK_PK"/>
    <property type="match status" value="1"/>
</dbReference>
<dbReference type="Gene3D" id="3.30.420.40">
    <property type="match status" value="2"/>
</dbReference>
<dbReference type="HAMAP" id="MF_00020">
    <property type="entry name" value="Acetate_kinase"/>
    <property type="match status" value="1"/>
</dbReference>
<dbReference type="InterPro" id="IPR004372">
    <property type="entry name" value="Ac/propionate_kinase"/>
</dbReference>
<dbReference type="InterPro" id="IPR000890">
    <property type="entry name" value="Aliphatic_acid_kin_short-chain"/>
</dbReference>
<dbReference type="InterPro" id="IPR023865">
    <property type="entry name" value="Aliphatic_acid_kinase_CS"/>
</dbReference>
<dbReference type="InterPro" id="IPR043129">
    <property type="entry name" value="ATPase_NBD"/>
</dbReference>
<dbReference type="NCBIfam" id="TIGR00016">
    <property type="entry name" value="ackA"/>
    <property type="match status" value="1"/>
</dbReference>
<dbReference type="PANTHER" id="PTHR21060">
    <property type="entry name" value="ACETATE KINASE"/>
    <property type="match status" value="1"/>
</dbReference>
<dbReference type="PANTHER" id="PTHR21060:SF15">
    <property type="entry name" value="ACETATE KINASE-RELATED"/>
    <property type="match status" value="1"/>
</dbReference>
<dbReference type="Pfam" id="PF00871">
    <property type="entry name" value="Acetate_kinase"/>
    <property type="match status" value="1"/>
</dbReference>
<dbReference type="PIRSF" id="PIRSF000722">
    <property type="entry name" value="Acetate_prop_kin"/>
    <property type="match status" value="1"/>
</dbReference>
<dbReference type="PRINTS" id="PR00471">
    <property type="entry name" value="ACETATEKNASE"/>
</dbReference>
<dbReference type="SUPFAM" id="SSF53067">
    <property type="entry name" value="Actin-like ATPase domain"/>
    <property type="match status" value="2"/>
</dbReference>
<dbReference type="PROSITE" id="PS01075">
    <property type="entry name" value="ACETATE_KINASE_1"/>
    <property type="match status" value="1"/>
</dbReference>
<dbReference type="PROSITE" id="PS01076">
    <property type="entry name" value="ACETATE_KINASE_2"/>
    <property type="match status" value="1"/>
</dbReference>
<evidence type="ECO:0000255" key="1">
    <source>
        <dbReference type="HAMAP-Rule" id="MF_00020"/>
    </source>
</evidence>
<gene>
    <name evidence="1" type="primary">ackA</name>
    <name type="ordered locus">MGAS2096_Spy0097</name>
</gene>